<gene>
    <name evidence="1" type="primary">pcn</name>
    <name type="ordered locus">NP_0554A</name>
</gene>
<evidence type="ECO:0000255" key="1">
    <source>
        <dbReference type="HAMAP-Rule" id="MF_00317"/>
    </source>
</evidence>
<organism>
    <name type="scientific">Natronomonas pharaonis (strain ATCC 35678 / DSM 2160 / CIP 103997 / JCM 8858 / NBRC 14720 / NCIMB 2260 / Gabara)</name>
    <name type="common">Halobacterium pharaonis</name>
    <dbReference type="NCBI Taxonomy" id="348780"/>
    <lineage>
        <taxon>Archaea</taxon>
        <taxon>Methanobacteriati</taxon>
        <taxon>Methanobacteriota</taxon>
        <taxon>Stenosarchaea group</taxon>
        <taxon>Halobacteria</taxon>
        <taxon>Halobacteriales</taxon>
        <taxon>Haloarculaceae</taxon>
        <taxon>Natronomonas</taxon>
    </lineage>
</organism>
<feature type="chain" id="PRO_1000019178" description="DNA polymerase sliding clamp">
    <location>
        <begin position="1"/>
        <end position="247"/>
    </location>
</feature>
<name>PCNA_NATPD</name>
<comment type="function">
    <text evidence="1">Sliding clamp subunit that acts as a moving platform for DNA processing. Responsible for tethering the catalytic subunit of DNA polymerase and other proteins to DNA during high-speed replication.</text>
</comment>
<comment type="subunit">
    <text evidence="1">Homotrimer. The subunits circularize to form a toroid; DNA passes through its center. Replication factor C (RFC) is required to load the toroid on the DNA.</text>
</comment>
<comment type="similarity">
    <text evidence="1">Belongs to the PCNA family.</text>
</comment>
<dbReference type="EMBL" id="CR936257">
    <property type="protein sequence ID" value="CAI48368.1"/>
    <property type="molecule type" value="Genomic_DNA"/>
</dbReference>
<dbReference type="RefSeq" id="WP_011322004.1">
    <property type="nucleotide sequence ID" value="NC_007426.1"/>
</dbReference>
<dbReference type="SMR" id="Q3IU15"/>
<dbReference type="STRING" id="348780.NP_0554A"/>
<dbReference type="EnsemblBacteria" id="CAI48368">
    <property type="protein sequence ID" value="CAI48368"/>
    <property type="gene ID" value="NP_0554A"/>
</dbReference>
<dbReference type="GeneID" id="3703009"/>
<dbReference type="KEGG" id="nph:NP_0554A"/>
<dbReference type="eggNOG" id="arCOG00488">
    <property type="taxonomic scope" value="Archaea"/>
</dbReference>
<dbReference type="HOGENOM" id="CLU_043978_1_1_2"/>
<dbReference type="OrthoDB" id="14749at2157"/>
<dbReference type="Proteomes" id="UP000002698">
    <property type="component" value="Chromosome"/>
</dbReference>
<dbReference type="GO" id="GO:0003677">
    <property type="term" value="F:DNA binding"/>
    <property type="evidence" value="ECO:0007669"/>
    <property type="project" value="UniProtKB-UniRule"/>
</dbReference>
<dbReference type="GO" id="GO:0030337">
    <property type="term" value="F:DNA polymerase processivity factor activity"/>
    <property type="evidence" value="ECO:0007669"/>
    <property type="project" value="UniProtKB-UniRule"/>
</dbReference>
<dbReference type="GO" id="GO:0006272">
    <property type="term" value="P:leading strand elongation"/>
    <property type="evidence" value="ECO:0007669"/>
    <property type="project" value="TreeGrafter"/>
</dbReference>
<dbReference type="GO" id="GO:0006275">
    <property type="term" value="P:regulation of DNA replication"/>
    <property type="evidence" value="ECO:0007669"/>
    <property type="project" value="UniProtKB-UniRule"/>
</dbReference>
<dbReference type="CDD" id="cd00577">
    <property type="entry name" value="PCNA"/>
    <property type="match status" value="1"/>
</dbReference>
<dbReference type="Gene3D" id="3.70.10.10">
    <property type="match status" value="1"/>
</dbReference>
<dbReference type="HAMAP" id="MF_00317">
    <property type="entry name" value="DNApol_clamp_arch"/>
    <property type="match status" value="1"/>
</dbReference>
<dbReference type="InterPro" id="IPR046938">
    <property type="entry name" value="DNA_clamp_sf"/>
</dbReference>
<dbReference type="InterPro" id="IPR000730">
    <property type="entry name" value="Pr_cel_nuc_antig"/>
</dbReference>
<dbReference type="InterPro" id="IPR022649">
    <property type="entry name" value="Pr_cel_nuc_antig_C"/>
</dbReference>
<dbReference type="InterPro" id="IPR022659">
    <property type="entry name" value="Pr_cel_nuc_antig_CS"/>
</dbReference>
<dbReference type="InterPro" id="IPR022648">
    <property type="entry name" value="Pr_cel_nuc_antig_N"/>
</dbReference>
<dbReference type="NCBIfam" id="NF002222">
    <property type="entry name" value="PRK01115.1-5"/>
    <property type="match status" value="1"/>
</dbReference>
<dbReference type="PANTHER" id="PTHR11352">
    <property type="entry name" value="PROLIFERATING CELL NUCLEAR ANTIGEN"/>
    <property type="match status" value="1"/>
</dbReference>
<dbReference type="PANTHER" id="PTHR11352:SF0">
    <property type="entry name" value="PROLIFERATING CELL NUCLEAR ANTIGEN"/>
    <property type="match status" value="1"/>
</dbReference>
<dbReference type="Pfam" id="PF02747">
    <property type="entry name" value="PCNA_C"/>
    <property type="match status" value="1"/>
</dbReference>
<dbReference type="Pfam" id="PF00705">
    <property type="entry name" value="PCNA_N"/>
    <property type="match status" value="1"/>
</dbReference>
<dbReference type="PRINTS" id="PR00339">
    <property type="entry name" value="PCNACYCLIN"/>
</dbReference>
<dbReference type="SUPFAM" id="SSF55979">
    <property type="entry name" value="DNA clamp"/>
    <property type="match status" value="1"/>
</dbReference>
<dbReference type="PROSITE" id="PS01251">
    <property type="entry name" value="PCNA_1"/>
    <property type="match status" value="1"/>
</dbReference>
<keyword id="KW-0235">DNA replication</keyword>
<keyword id="KW-0238">DNA-binding</keyword>
<keyword id="KW-1185">Reference proteome</keyword>
<accession>Q3IU15</accession>
<protein>
    <recommendedName>
        <fullName evidence="1">DNA polymerase sliding clamp</fullName>
    </recommendedName>
    <alternativeName>
        <fullName evidence="1">Proliferating cell nuclear antigen homolog</fullName>
        <shortName evidence="1">PCNA</shortName>
    </alternativeName>
</protein>
<reference key="1">
    <citation type="journal article" date="2005" name="Genome Res.">
        <title>Living with two extremes: conclusions from the genome sequence of Natronomonas pharaonis.</title>
        <authorList>
            <person name="Falb M."/>
            <person name="Pfeiffer F."/>
            <person name="Palm P."/>
            <person name="Rodewald K."/>
            <person name="Hickmann V."/>
            <person name="Tittor J."/>
            <person name="Oesterhelt D."/>
        </authorList>
    </citation>
    <scope>NUCLEOTIDE SEQUENCE [LARGE SCALE GENOMIC DNA]</scope>
    <source>
        <strain>ATCC 35678 / DSM 2160 / CIP 103997 / JCM 8858 / NBRC 14720 / NCIMB 2260 / Gabara</strain>
    </source>
</reference>
<proteinExistence type="inferred from homology"/>
<sequence>MFKAIVSADTLGAALDSVSVLVDECKVRLDEEGLTIRAVDPANVGMVDLELSASAFESYETDGGVIGVNLDRLEDIVGMADSGQLVHLDLDEETRKLHISLDGLEYTLALIDPDSIRQEPDLPDLDLSSEIVIEGADIDRAVTAADMVSDHIALGVDPDAEEFYVDAEGDTDDVHLELDREDLIDLTPGEARSLFSLDYLKDMNKAIPKDAEVTMELGEEFPVKMHFDFAEGDGHVTYMLAPRIQSD</sequence>